<dbReference type="EC" id="2.8.1.7" evidence="1"/>
<dbReference type="EMBL" id="CP000947">
    <property type="protein sequence ID" value="ACA31296.1"/>
    <property type="molecule type" value="Genomic_DNA"/>
</dbReference>
<dbReference type="RefSeq" id="WP_012340679.1">
    <property type="nucleotide sequence ID" value="NC_010519.1"/>
</dbReference>
<dbReference type="SMR" id="B0UVL5"/>
<dbReference type="STRING" id="228400.HSM_0154"/>
<dbReference type="GeneID" id="31486432"/>
<dbReference type="KEGG" id="hsm:HSM_0154"/>
<dbReference type="HOGENOM" id="CLU_003433_0_2_6"/>
<dbReference type="UniPathway" id="UPA00266"/>
<dbReference type="GO" id="GO:1990221">
    <property type="term" value="C:L-cysteine desulfurase complex"/>
    <property type="evidence" value="ECO:0007669"/>
    <property type="project" value="UniProtKB-ARBA"/>
</dbReference>
<dbReference type="GO" id="GO:0051537">
    <property type="term" value="F:2 iron, 2 sulfur cluster binding"/>
    <property type="evidence" value="ECO:0007669"/>
    <property type="project" value="UniProtKB-UniRule"/>
</dbReference>
<dbReference type="GO" id="GO:0031071">
    <property type="term" value="F:cysteine desulfurase activity"/>
    <property type="evidence" value="ECO:0007669"/>
    <property type="project" value="UniProtKB-UniRule"/>
</dbReference>
<dbReference type="GO" id="GO:0046872">
    <property type="term" value="F:metal ion binding"/>
    <property type="evidence" value="ECO:0007669"/>
    <property type="project" value="UniProtKB-KW"/>
</dbReference>
<dbReference type="GO" id="GO:0030170">
    <property type="term" value="F:pyridoxal phosphate binding"/>
    <property type="evidence" value="ECO:0007669"/>
    <property type="project" value="UniProtKB-UniRule"/>
</dbReference>
<dbReference type="GO" id="GO:0044571">
    <property type="term" value="P:[2Fe-2S] cluster assembly"/>
    <property type="evidence" value="ECO:0007669"/>
    <property type="project" value="UniProtKB-UniRule"/>
</dbReference>
<dbReference type="FunFam" id="3.40.640.10:FF:000003">
    <property type="entry name" value="Cysteine desulfurase IscS"/>
    <property type="match status" value="1"/>
</dbReference>
<dbReference type="FunFam" id="3.90.1150.10:FF:000002">
    <property type="entry name" value="Cysteine desulfurase IscS"/>
    <property type="match status" value="1"/>
</dbReference>
<dbReference type="Gene3D" id="3.90.1150.10">
    <property type="entry name" value="Aspartate Aminotransferase, domain 1"/>
    <property type="match status" value="1"/>
</dbReference>
<dbReference type="Gene3D" id="3.40.640.10">
    <property type="entry name" value="Type I PLP-dependent aspartate aminotransferase-like (Major domain)"/>
    <property type="match status" value="1"/>
</dbReference>
<dbReference type="HAMAP" id="MF_00331">
    <property type="entry name" value="Cys_desulf_IscS"/>
    <property type="match status" value="1"/>
</dbReference>
<dbReference type="InterPro" id="IPR000192">
    <property type="entry name" value="Aminotrans_V_dom"/>
</dbReference>
<dbReference type="InterPro" id="IPR020578">
    <property type="entry name" value="Aminotrans_V_PyrdxlP_BS"/>
</dbReference>
<dbReference type="InterPro" id="IPR010240">
    <property type="entry name" value="Cys_deSase_IscS"/>
</dbReference>
<dbReference type="InterPro" id="IPR016454">
    <property type="entry name" value="Cysteine_dSase"/>
</dbReference>
<dbReference type="InterPro" id="IPR015424">
    <property type="entry name" value="PyrdxlP-dep_Trfase"/>
</dbReference>
<dbReference type="InterPro" id="IPR015421">
    <property type="entry name" value="PyrdxlP-dep_Trfase_major"/>
</dbReference>
<dbReference type="InterPro" id="IPR015422">
    <property type="entry name" value="PyrdxlP-dep_Trfase_small"/>
</dbReference>
<dbReference type="NCBIfam" id="TIGR02006">
    <property type="entry name" value="IscS"/>
    <property type="match status" value="1"/>
</dbReference>
<dbReference type="NCBIfam" id="NF002806">
    <property type="entry name" value="PRK02948.1"/>
    <property type="match status" value="1"/>
</dbReference>
<dbReference type="NCBIfam" id="NF010611">
    <property type="entry name" value="PRK14012.1"/>
    <property type="match status" value="1"/>
</dbReference>
<dbReference type="PANTHER" id="PTHR11601:SF34">
    <property type="entry name" value="CYSTEINE DESULFURASE"/>
    <property type="match status" value="1"/>
</dbReference>
<dbReference type="PANTHER" id="PTHR11601">
    <property type="entry name" value="CYSTEINE DESULFURYLASE FAMILY MEMBER"/>
    <property type="match status" value="1"/>
</dbReference>
<dbReference type="Pfam" id="PF00266">
    <property type="entry name" value="Aminotran_5"/>
    <property type="match status" value="1"/>
</dbReference>
<dbReference type="PIRSF" id="PIRSF005572">
    <property type="entry name" value="NifS"/>
    <property type="match status" value="1"/>
</dbReference>
<dbReference type="SUPFAM" id="SSF53383">
    <property type="entry name" value="PLP-dependent transferases"/>
    <property type="match status" value="1"/>
</dbReference>
<dbReference type="PROSITE" id="PS00595">
    <property type="entry name" value="AA_TRANSFER_CLASS_5"/>
    <property type="match status" value="1"/>
</dbReference>
<sequence length="404" mass="45122">MKLPIYLDYAATCPVDERVVKKMMEFLSIDGNFGNPASRSHKFGWQAEEAVDVARNHIADLIGADSREIVFTSGATEADNLALKGVMRFYQTKGKHLITCKTEHKAILDTCRQLEREGFEVTYLDPKSDGLIDLEELKSVIRDDTVLVSIMHANNEIGVVQDIAKIGEICRERKVLFHTDATQSVGKLPINLSELKVDLLSMSSHKLYGPKGIGALYVCRKPRVRLEAIIHGGGHERGMRSGTLPVHQIVGMGEAYRIAKEEMATEMPRLTALRDRLYNGLKDIEETYVNGSMEQRLGNNLNISFNYVEGESLMMALRDIAVSSGSACTSASLEPSYVLRALGLNDELAHSSIRFTVGRYTTEEEIDYSIGLVKSAVKKLRDLSPLWDMFKEGIDLNSIEWTHH</sequence>
<name>ISCS_HISS2</name>
<proteinExistence type="inferred from homology"/>
<feature type="chain" id="PRO_1000079205" description="Cysteine desulfurase IscS">
    <location>
        <begin position="1"/>
        <end position="404"/>
    </location>
</feature>
<feature type="active site" description="Cysteine persulfide intermediate" evidence="1">
    <location>
        <position position="328"/>
    </location>
</feature>
<feature type="binding site" evidence="1">
    <location>
        <begin position="75"/>
        <end position="76"/>
    </location>
    <ligand>
        <name>pyridoxal 5'-phosphate</name>
        <dbReference type="ChEBI" id="CHEBI:597326"/>
    </ligand>
</feature>
<feature type="binding site" evidence="1">
    <location>
        <position position="155"/>
    </location>
    <ligand>
        <name>pyridoxal 5'-phosphate</name>
        <dbReference type="ChEBI" id="CHEBI:597326"/>
    </ligand>
</feature>
<feature type="binding site" evidence="1">
    <location>
        <position position="183"/>
    </location>
    <ligand>
        <name>pyridoxal 5'-phosphate</name>
        <dbReference type="ChEBI" id="CHEBI:597326"/>
    </ligand>
</feature>
<feature type="binding site" evidence="1">
    <location>
        <begin position="203"/>
        <end position="205"/>
    </location>
    <ligand>
        <name>pyridoxal 5'-phosphate</name>
        <dbReference type="ChEBI" id="CHEBI:597326"/>
    </ligand>
</feature>
<feature type="binding site" evidence="1">
    <location>
        <position position="243"/>
    </location>
    <ligand>
        <name>pyridoxal 5'-phosphate</name>
        <dbReference type="ChEBI" id="CHEBI:597326"/>
    </ligand>
</feature>
<feature type="binding site" description="via persulfide group" evidence="1">
    <location>
        <position position="328"/>
    </location>
    <ligand>
        <name>[2Fe-2S] cluster</name>
        <dbReference type="ChEBI" id="CHEBI:190135"/>
        <note>ligand shared with IscU</note>
    </ligand>
</feature>
<feature type="modified residue" description="N6-(pyridoxal phosphate)lysine" evidence="1">
    <location>
        <position position="206"/>
    </location>
</feature>
<comment type="function">
    <text evidence="1">Master enzyme that delivers sulfur to a number of partners involved in Fe-S cluster assembly, tRNA modification or cofactor biosynthesis. Catalyzes the removal of elemental sulfur atoms from cysteine to produce alanine. Functions as a sulfur delivery protein for Fe-S cluster synthesis onto IscU, an Fe-S scaffold assembly protein, as well as other S acceptor proteins.</text>
</comment>
<comment type="catalytic activity">
    <reaction evidence="1">
        <text>(sulfur carrier)-H + L-cysteine = (sulfur carrier)-SH + L-alanine</text>
        <dbReference type="Rhea" id="RHEA:43892"/>
        <dbReference type="Rhea" id="RHEA-COMP:14737"/>
        <dbReference type="Rhea" id="RHEA-COMP:14739"/>
        <dbReference type="ChEBI" id="CHEBI:29917"/>
        <dbReference type="ChEBI" id="CHEBI:35235"/>
        <dbReference type="ChEBI" id="CHEBI:57972"/>
        <dbReference type="ChEBI" id="CHEBI:64428"/>
        <dbReference type="EC" id="2.8.1.7"/>
    </reaction>
</comment>
<comment type="cofactor">
    <cofactor evidence="1">
        <name>pyridoxal 5'-phosphate</name>
        <dbReference type="ChEBI" id="CHEBI:597326"/>
    </cofactor>
</comment>
<comment type="pathway">
    <text evidence="1">Cofactor biosynthesis; iron-sulfur cluster biosynthesis.</text>
</comment>
<comment type="subunit">
    <text evidence="1">Homodimer. Forms a heterotetramer with IscU, interacts with other sulfur acceptors.</text>
</comment>
<comment type="subcellular location">
    <subcellularLocation>
        <location evidence="1">Cytoplasm</location>
    </subcellularLocation>
</comment>
<comment type="similarity">
    <text evidence="1">Belongs to the class-V pyridoxal-phosphate-dependent aminotransferase family. NifS/IscS subfamily.</text>
</comment>
<gene>
    <name evidence="1" type="primary">iscS</name>
    <name type="ordered locus">HSM_0154</name>
</gene>
<reference key="1">
    <citation type="submission" date="2008-02" db="EMBL/GenBank/DDBJ databases">
        <title>Complete sequence of Haemophilus somnus 2336.</title>
        <authorList>
            <consortium name="US DOE Joint Genome Institute"/>
            <person name="Siddaramappa S."/>
            <person name="Duncan A.J."/>
            <person name="Challacombe J.F."/>
            <person name="Rainey D."/>
            <person name="Gillaspy A.F."/>
            <person name="Carson M."/>
            <person name="Gipson J."/>
            <person name="Gipson M."/>
            <person name="Bruce D."/>
            <person name="Detter J.C."/>
            <person name="Han C.S."/>
            <person name="Land M."/>
            <person name="Tapia R."/>
            <person name="Thompson L.S."/>
            <person name="Orvis J."/>
            <person name="Zaitshik J."/>
            <person name="Barnes G."/>
            <person name="Brettin T.S."/>
            <person name="Dyer D.W."/>
            <person name="Inzana T.J."/>
        </authorList>
    </citation>
    <scope>NUCLEOTIDE SEQUENCE [LARGE SCALE GENOMIC DNA]</scope>
    <source>
        <strain>2336</strain>
    </source>
</reference>
<protein>
    <recommendedName>
        <fullName evidence="1">Cysteine desulfurase IscS</fullName>
        <ecNumber evidence="1">2.8.1.7</ecNumber>
    </recommendedName>
</protein>
<evidence type="ECO:0000255" key="1">
    <source>
        <dbReference type="HAMAP-Rule" id="MF_00331"/>
    </source>
</evidence>
<organism>
    <name type="scientific">Histophilus somni (strain 2336)</name>
    <name type="common">Haemophilus somnus</name>
    <dbReference type="NCBI Taxonomy" id="228400"/>
    <lineage>
        <taxon>Bacteria</taxon>
        <taxon>Pseudomonadati</taxon>
        <taxon>Pseudomonadota</taxon>
        <taxon>Gammaproteobacteria</taxon>
        <taxon>Pasteurellales</taxon>
        <taxon>Pasteurellaceae</taxon>
        <taxon>Histophilus</taxon>
    </lineage>
</organism>
<keyword id="KW-0001">2Fe-2S</keyword>
<keyword id="KW-0963">Cytoplasm</keyword>
<keyword id="KW-0408">Iron</keyword>
<keyword id="KW-0411">Iron-sulfur</keyword>
<keyword id="KW-0479">Metal-binding</keyword>
<keyword id="KW-0663">Pyridoxal phosphate</keyword>
<keyword id="KW-0808">Transferase</keyword>
<accession>B0UVL5</accession>